<dbReference type="EC" id="3.1.4.53" evidence="9"/>
<dbReference type="EMBL" id="AY129948">
    <property type="protein sequence ID" value="AAN71723.1"/>
    <property type="molecule type" value="mRNA"/>
</dbReference>
<dbReference type="EMBL" id="AY129949">
    <property type="protein sequence ID" value="AAN71724.1"/>
    <property type="molecule type" value="mRNA"/>
</dbReference>
<dbReference type="EMBL" id="AY129950">
    <property type="protein sequence ID" value="AAN71725.1"/>
    <property type="molecule type" value="Genomic_DNA"/>
</dbReference>
<dbReference type="EMBL" id="AY129950">
    <property type="protein sequence ID" value="AAN71726.1"/>
    <property type="molecule type" value="Genomic_DNA"/>
</dbReference>
<dbReference type="EMBL" id="AY129950">
    <property type="protein sequence ID" value="AAN71727.1"/>
    <property type="molecule type" value="Genomic_DNA"/>
</dbReference>
<dbReference type="EMBL" id="AB085824">
    <property type="protein sequence ID" value="BAC53762.1"/>
    <property type="molecule type" value="mRNA"/>
</dbReference>
<dbReference type="EMBL" id="AB085825">
    <property type="protein sequence ID" value="BAC53763.1"/>
    <property type="molecule type" value="mRNA"/>
</dbReference>
<dbReference type="EMBL" id="AB085826">
    <property type="protein sequence ID" value="BAC53764.1"/>
    <property type="molecule type" value="mRNA"/>
</dbReference>
<dbReference type="EMBL" id="AB085827">
    <property type="protein sequence ID" value="BAC53765.1"/>
    <property type="molecule type" value="mRNA"/>
</dbReference>
<dbReference type="EMBL" id="AY423729">
    <property type="protein sequence ID" value="AAS00492.1"/>
    <property type="molecule type" value="mRNA"/>
</dbReference>
<dbReference type="EMBL" id="CH471084">
    <property type="protein sequence ID" value="EAW95803.1"/>
    <property type="molecule type" value="Genomic_DNA"/>
</dbReference>
<dbReference type="EMBL" id="BC043209">
    <property type="status" value="NOT_ANNOTATED_CDS"/>
    <property type="molecule type" value="mRNA"/>
</dbReference>
<dbReference type="EMBL" id="AF079529">
    <property type="protein sequence ID" value="AAC69564.2"/>
    <property type="molecule type" value="mRNA"/>
</dbReference>
<dbReference type="EMBL" id="AL831924">
    <property type="protein sequence ID" value="CAD38584.1"/>
    <property type="molecule type" value="mRNA"/>
</dbReference>
<dbReference type="CCDS" id="CCDS34190.1">
    <molecule id="O95263-3"/>
</dbReference>
<dbReference type="CCDS" id="CCDS34191.1">
    <molecule id="O95263-6"/>
</dbReference>
<dbReference type="CCDS" id="CCDS34192.1">
    <molecule id="O95263-2"/>
</dbReference>
<dbReference type="CCDS" id="CCDS34193.1">
    <molecule id="O95263-4"/>
</dbReference>
<dbReference type="CCDS" id="CCDS4037.1">
    <molecule id="O95263-1"/>
</dbReference>
<dbReference type="PIR" id="JE0293">
    <property type="entry name" value="JE0293"/>
</dbReference>
<dbReference type="RefSeq" id="NP_001025022.1">
    <molecule id="O95263-2"/>
    <property type="nucleotide sequence ID" value="NM_001029851.4"/>
</dbReference>
<dbReference type="RefSeq" id="NP_001025023.1">
    <molecule id="O95263-3"/>
    <property type="nucleotide sequence ID" value="NM_001029852.4"/>
</dbReference>
<dbReference type="RefSeq" id="NP_001025024.1">
    <molecule id="O95263-4"/>
    <property type="nucleotide sequence ID" value="NM_001029853.4"/>
</dbReference>
<dbReference type="RefSeq" id="NP_001025025.1">
    <molecule id="O95263-6"/>
    <property type="nucleotide sequence ID" value="NM_001029854.4"/>
</dbReference>
<dbReference type="RefSeq" id="NP_003710.1">
    <molecule id="O95263-1"/>
    <property type="nucleotide sequence ID" value="NM_003719.5"/>
</dbReference>
<dbReference type="SMR" id="O95263"/>
<dbReference type="BioGRID" id="114177">
    <property type="interactions" value="11"/>
</dbReference>
<dbReference type="CORUM" id="O95263"/>
<dbReference type="FunCoup" id="O95263">
    <property type="interactions" value="217"/>
</dbReference>
<dbReference type="IntAct" id="O95263">
    <property type="interactions" value="4"/>
</dbReference>
<dbReference type="MINT" id="O95263"/>
<dbReference type="STRING" id="9606.ENSP00000264917"/>
<dbReference type="BindingDB" id="O95263"/>
<dbReference type="ChEMBL" id="CHEMBL4408"/>
<dbReference type="DrugBank" id="DB00201">
    <property type="generic name" value="Caffeine"/>
</dbReference>
<dbReference type="DrugBank" id="DB09283">
    <property type="generic name" value="Trapidil"/>
</dbReference>
<dbReference type="DrugCentral" id="O95263"/>
<dbReference type="GuidetoPHARMACOLOGY" id="1308"/>
<dbReference type="iPTMnet" id="O95263"/>
<dbReference type="PhosphoSitePlus" id="O95263"/>
<dbReference type="BioMuta" id="PDE8B"/>
<dbReference type="jPOST" id="O95263"/>
<dbReference type="MassIVE" id="O95263"/>
<dbReference type="PaxDb" id="9606-ENSP00000264917"/>
<dbReference type="PeptideAtlas" id="O95263"/>
<dbReference type="ProteomicsDB" id="50759">
    <molecule id="O95263-1"/>
</dbReference>
<dbReference type="ProteomicsDB" id="50760">
    <molecule id="O95263-2"/>
</dbReference>
<dbReference type="ProteomicsDB" id="50761">
    <molecule id="O95263-3"/>
</dbReference>
<dbReference type="ProteomicsDB" id="50762">
    <molecule id="O95263-4"/>
</dbReference>
<dbReference type="ProteomicsDB" id="50763">
    <molecule id="O95263-5"/>
</dbReference>
<dbReference type="ProteomicsDB" id="50764">
    <molecule id="O95263-6"/>
</dbReference>
<dbReference type="Pumba" id="O95263"/>
<dbReference type="Antibodypedia" id="12495">
    <property type="antibodies" value="147 antibodies from 25 providers"/>
</dbReference>
<dbReference type="DNASU" id="8622"/>
<dbReference type="Ensembl" id="ENST00000264917.10">
    <molecule id="O95263-1"/>
    <property type="protein sequence ID" value="ENSP00000264917.6"/>
    <property type="gene ID" value="ENSG00000113231.14"/>
</dbReference>
<dbReference type="Ensembl" id="ENST00000333194.8">
    <molecule id="O95263-3"/>
    <property type="protein sequence ID" value="ENSP00000331336.4"/>
    <property type="gene ID" value="ENSG00000113231.14"/>
</dbReference>
<dbReference type="Ensembl" id="ENST00000340978.7">
    <molecule id="O95263-6"/>
    <property type="protein sequence ID" value="ENSP00000345446.3"/>
    <property type="gene ID" value="ENSG00000113231.14"/>
</dbReference>
<dbReference type="Ensembl" id="ENST00000342343.8">
    <molecule id="O95263-4"/>
    <property type="protein sequence ID" value="ENSP00000345646.4"/>
    <property type="gene ID" value="ENSG00000113231.14"/>
</dbReference>
<dbReference type="Ensembl" id="ENST00000346042.7">
    <molecule id="O95263-2"/>
    <property type="protein sequence ID" value="ENSP00000330428.3"/>
    <property type="gene ID" value="ENSG00000113231.14"/>
</dbReference>
<dbReference type="Ensembl" id="ENST00000505283.1">
    <molecule id="O95263-5"/>
    <property type="protein sequence ID" value="ENSP00000423461.1"/>
    <property type="gene ID" value="ENSG00000113231.14"/>
</dbReference>
<dbReference type="GeneID" id="8622"/>
<dbReference type="KEGG" id="hsa:8622"/>
<dbReference type="MANE-Select" id="ENST00000264917.10">
    <property type="protein sequence ID" value="ENSP00000264917.6"/>
    <property type="RefSeq nucleotide sequence ID" value="NM_003719.5"/>
    <property type="RefSeq protein sequence ID" value="NP_003710.1"/>
</dbReference>
<dbReference type="UCSC" id="uc003kfa.4">
    <molecule id="O95263-1"/>
    <property type="organism name" value="human"/>
</dbReference>
<dbReference type="AGR" id="HGNC:8794"/>
<dbReference type="CTD" id="8622"/>
<dbReference type="DisGeNET" id="8622"/>
<dbReference type="GeneCards" id="PDE8B"/>
<dbReference type="HGNC" id="HGNC:8794">
    <property type="gene designation" value="PDE8B"/>
</dbReference>
<dbReference type="HPA" id="ENSG00000113231">
    <property type="expression patterns" value="Tissue enriched (thyroid)"/>
</dbReference>
<dbReference type="MalaCards" id="PDE8B"/>
<dbReference type="MIM" id="603390">
    <property type="type" value="gene"/>
</dbReference>
<dbReference type="MIM" id="609161">
    <property type="type" value="phenotype"/>
</dbReference>
<dbReference type="MIM" id="614190">
    <property type="type" value="phenotype"/>
</dbReference>
<dbReference type="neXtProt" id="NX_O95263"/>
<dbReference type="OpenTargets" id="ENSG00000113231"/>
<dbReference type="Orphanet" id="228169">
    <property type="disease" value="Autosomal dominant striatal neurodegeneration"/>
</dbReference>
<dbReference type="Orphanet" id="647782">
    <property type="disease" value="Isolated micronodular adrenocortical disease"/>
</dbReference>
<dbReference type="PharmGKB" id="PA33142"/>
<dbReference type="VEuPathDB" id="HostDB:ENSG00000113231"/>
<dbReference type="eggNOG" id="KOG1229">
    <property type="taxonomic scope" value="Eukaryota"/>
</dbReference>
<dbReference type="GeneTree" id="ENSGT00940000157817"/>
<dbReference type="HOGENOM" id="CLU_005940_4_2_1"/>
<dbReference type="InParanoid" id="O95263"/>
<dbReference type="OMA" id="RWCCGGS"/>
<dbReference type="OrthoDB" id="189220at2759"/>
<dbReference type="PAN-GO" id="O95263">
    <property type="GO annotations" value="2 GO annotations based on evolutionary models"/>
</dbReference>
<dbReference type="PhylomeDB" id="O95263"/>
<dbReference type="TreeFam" id="TF314638"/>
<dbReference type="BRENDA" id="3.1.4.53">
    <property type="organism ID" value="2681"/>
</dbReference>
<dbReference type="PathwayCommons" id="O95263"/>
<dbReference type="Reactome" id="R-HSA-418555">
    <property type="pathway name" value="G alpha (s) signalling events"/>
</dbReference>
<dbReference type="SignaLink" id="O95263"/>
<dbReference type="UniPathway" id="UPA00762">
    <property type="reaction ID" value="UER00747"/>
</dbReference>
<dbReference type="BioGRID-ORCS" id="8622">
    <property type="hits" value="19 hits in 1161 CRISPR screens"/>
</dbReference>
<dbReference type="ChiTaRS" id="PDE8B">
    <property type="organism name" value="human"/>
</dbReference>
<dbReference type="GeneWiki" id="PDE8B"/>
<dbReference type="GenomeRNAi" id="8622"/>
<dbReference type="Pharos" id="O95263">
    <property type="development level" value="Tclin"/>
</dbReference>
<dbReference type="PRO" id="PR:O95263"/>
<dbReference type="Proteomes" id="UP000005640">
    <property type="component" value="Chromosome 5"/>
</dbReference>
<dbReference type="RNAct" id="O95263">
    <property type="molecule type" value="protein"/>
</dbReference>
<dbReference type="Bgee" id="ENSG00000113231">
    <property type="expression patterns" value="Expressed in left lobe of thyroid gland and 104 other cell types or tissues"/>
</dbReference>
<dbReference type="ExpressionAtlas" id="O95263">
    <property type="expression patterns" value="baseline and differential"/>
</dbReference>
<dbReference type="GO" id="GO:0005829">
    <property type="term" value="C:cytosol"/>
    <property type="evidence" value="ECO:0000304"/>
    <property type="project" value="Reactome"/>
</dbReference>
<dbReference type="GO" id="GO:0004115">
    <property type="term" value="F:3',5'-cyclic-AMP phosphodiesterase activity"/>
    <property type="evidence" value="ECO:0000315"/>
    <property type="project" value="UniProtKB"/>
</dbReference>
<dbReference type="GO" id="GO:0047555">
    <property type="term" value="F:3',5'-cyclic-GMP phosphodiesterase activity"/>
    <property type="evidence" value="ECO:0000318"/>
    <property type="project" value="GO_Central"/>
</dbReference>
<dbReference type="GO" id="GO:0046872">
    <property type="term" value="F:metal ion binding"/>
    <property type="evidence" value="ECO:0007669"/>
    <property type="project" value="UniProtKB-KW"/>
</dbReference>
<dbReference type="GO" id="GO:0001662">
    <property type="term" value="P:behavioral fear response"/>
    <property type="evidence" value="ECO:0007669"/>
    <property type="project" value="Ensembl"/>
</dbReference>
<dbReference type="GO" id="GO:0006198">
    <property type="term" value="P:cAMP catabolic process"/>
    <property type="evidence" value="ECO:0007669"/>
    <property type="project" value="UniProtKB-UniPathway"/>
</dbReference>
<dbReference type="GO" id="GO:0019933">
    <property type="term" value="P:cAMP-mediated signaling"/>
    <property type="evidence" value="ECO:0000318"/>
    <property type="project" value="GO_Central"/>
</dbReference>
<dbReference type="GO" id="GO:0061179">
    <property type="term" value="P:negative regulation of insulin secretion involved in cellular response to glucose stimulus"/>
    <property type="evidence" value="ECO:0007669"/>
    <property type="project" value="Ensembl"/>
</dbReference>
<dbReference type="GO" id="GO:0090032">
    <property type="term" value="P:negative regulation of steroid hormone biosynthetic process"/>
    <property type="evidence" value="ECO:0007669"/>
    <property type="project" value="Ensembl"/>
</dbReference>
<dbReference type="GO" id="GO:0050885">
    <property type="term" value="P:neuromuscular process controlling balance"/>
    <property type="evidence" value="ECO:0007669"/>
    <property type="project" value="Ensembl"/>
</dbReference>
<dbReference type="GO" id="GO:0035106">
    <property type="term" value="P:operant conditioning"/>
    <property type="evidence" value="ECO:0007669"/>
    <property type="project" value="Ensembl"/>
</dbReference>
<dbReference type="GO" id="GO:0070374">
    <property type="term" value="P:positive regulation of ERK1 and ERK2 cascade"/>
    <property type="evidence" value="ECO:0000318"/>
    <property type="project" value="GO_Central"/>
</dbReference>
<dbReference type="GO" id="GO:0008542">
    <property type="term" value="P:visual learning"/>
    <property type="evidence" value="ECO:0007669"/>
    <property type="project" value="Ensembl"/>
</dbReference>
<dbReference type="CDD" id="cd00077">
    <property type="entry name" value="HDc"/>
    <property type="match status" value="1"/>
</dbReference>
<dbReference type="CDD" id="cd00130">
    <property type="entry name" value="PAS"/>
    <property type="match status" value="1"/>
</dbReference>
<dbReference type="FunFam" id="1.10.1300.10:FF:000002">
    <property type="entry name" value="Phosphodiesterase"/>
    <property type="match status" value="1"/>
</dbReference>
<dbReference type="FunFam" id="3.30.450.20:FF:000023">
    <property type="entry name" value="Phosphodiesterase"/>
    <property type="match status" value="1"/>
</dbReference>
<dbReference type="Gene3D" id="1.10.1300.10">
    <property type="entry name" value="3'5'-cyclic nucleotide phosphodiesterase, catalytic domain"/>
    <property type="match status" value="1"/>
</dbReference>
<dbReference type="Gene3D" id="3.30.450.20">
    <property type="entry name" value="PAS domain"/>
    <property type="match status" value="1"/>
</dbReference>
<dbReference type="InterPro" id="IPR003607">
    <property type="entry name" value="HD/PDEase_dom"/>
</dbReference>
<dbReference type="InterPro" id="IPR000014">
    <property type="entry name" value="PAS"/>
</dbReference>
<dbReference type="InterPro" id="IPR035965">
    <property type="entry name" value="PAS-like_dom_sf"/>
</dbReference>
<dbReference type="InterPro" id="IPR023088">
    <property type="entry name" value="PDEase"/>
</dbReference>
<dbReference type="InterPro" id="IPR002073">
    <property type="entry name" value="PDEase_catalytic_dom"/>
</dbReference>
<dbReference type="InterPro" id="IPR036971">
    <property type="entry name" value="PDEase_catalytic_dom_sf"/>
</dbReference>
<dbReference type="InterPro" id="IPR023174">
    <property type="entry name" value="PDEase_CS"/>
</dbReference>
<dbReference type="InterPro" id="IPR013938">
    <property type="entry name" value="PDEase_PDE8"/>
</dbReference>
<dbReference type="NCBIfam" id="TIGR00229">
    <property type="entry name" value="sensory_box"/>
    <property type="match status" value="1"/>
</dbReference>
<dbReference type="PANTHER" id="PTHR11347">
    <property type="entry name" value="CYCLIC NUCLEOTIDE PHOSPHODIESTERASE"/>
    <property type="match status" value="1"/>
</dbReference>
<dbReference type="Pfam" id="PF13426">
    <property type="entry name" value="PAS_9"/>
    <property type="match status" value="1"/>
</dbReference>
<dbReference type="Pfam" id="PF08629">
    <property type="entry name" value="PDE8"/>
    <property type="match status" value="1"/>
</dbReference>
<dbReference type="Pfam" id="PF23198">
    <property type="entry name" value="PDE8A_N"/>
    <property type="match status" value="1"/>
</dbReference>
<dbReference type="Pfam" id="PF00233">
    <property type="entry name" value="PDEase_I"/>
    <property type="match status" value="1"/>
</dbReference>
<dbReference type="PRINTS" id="PR00387">
    <property type="entry name" value="PDIESTERASE1"/>
</dbReference>
<dbReference type="SMART" id="SM00471">
    <property type="entry name" value="HDc"/>
    <property type="match status" value="1"/>
</dbReference>
<dbReference type="SMART" id="SM00091">
    <property type="entry name" value="PAS"/>
    <property type="match status" value="1"/>
</dbReference>
<dbReference type="SUPFAM" id="SSF109604">
    <property type="entry name" value="HD-domain/PDEase-like"/>
    <property type="match status" value="1"/>
</dbReference>
<dbReference type="SUPFAM" id="SSF55785">
    <property type="entry name" value="PYP-like sensor domain (PAS domain)"/>
    <property type="match status" value="1"/>
</dbReference>
<dbReference type="PROSITE" id="PS50112">
    <property type="entry name" value="PAS"/>
    <property type="match status" value="1"/>
</dbReference>
<dbReference type="PROSITE" id="PS00126">
    <property type="entry name" value="PDEASE_I_1"/>
    <property type="match status" value="1"/>
</dbReference>
<dbReference type="PROSITE" id="PS51845">
    <property type="entry name" value="PDEASE_I_2"/>
    <property type="match status" value="1"/>
</dbReference>
<sequence length="885" mass="98979">MGCAPSIHVSQSGVIYCRDSDESSSPRQTTSVSQGPAAPLPGLFVQTDAADAIPPSRASGPPSVARVRRARTELGSGSSAGSAAPAATTSRGRRRHCCSSAEAETQTCYTSVKQVSSAEVRIGPMRLTQDPIQVLLIFAKEDSQSDGFWWACDRAGYRCNIARTPESALECFLDKHHEIIVIDHRQTQNFDAEAVCRSIRATNPSEHTVILAVVSRVSDDHEEASVLPLLHAGFNRRFMENSSIIACYNELIQIEHGEVRSQFKLRACNSVFTALDHCHEAIEITSDDHVIQYVNPAFERMMGYHKGELLGKELADLPKSDKNRADLLDTINTCIKKGKEWQGVYYARRKSGDSIQQHVKITPVIGQGGKIRHFVSLKKLCCTTDNNKQIHKIHRDSGDNSQTEPHSFRYKNRRKESIDVKSISSRGSDAPSLQNRRYPSMARIHSMTIEAPITKVINIINAAQENSPVTVAEALDRVLEILRTTELYSPQLGTKDEDPHTSDLVGGLMTDGLRRLSGNEYVFTKNVHQSHSHLAMPITINDVPPCISQLLDNEESWDFNIFELEAITHKRPLVYLGLKVFSRFGVCEFLNCSETTLRAWFQVIEANYHSSNAYHNSTHAADVLHATAFFLGKERVKGSLDQLDEVAALIAATVHDVDHPGRTNSFLCNAGSELAVLYNDTAVLESHHTALAFQLTVKDTKCNIFKNIDRNHYRTLRQAIIDMVLATEMTKHFEHVNKFVNSINKPMAAEIEGSDCECNPAGKNFPENQILIKRMMIKCADVANPCRPLDLCIEWAGRISEEYFAQTDEEKRQGLPVVMPVFDRNTCSIPKSQISFIDYFITDMFDAWDAFAHLPALMQHLADNYKHWKTLDDLKCKSLRLPSDS</sequence>
<gene>
    <name type="primary">PDE8B</name>
    <name type="ORF">PIG22</name>
</gene>
<name>PDE8B_HUMAN</name>
<proteinExistence type="evidence at protein level"/>
<protein>
    <recommendedName>
        <fullName>High affinity cAMP-specific and IBMX-insensitive 3',5'-cyclic phosphodiesterase 8B</fullName>
        <shortName>HsPDE8B</shortName>
        <ecNumber evidence="9">3.1.4.53</ecNumber>
    </recommendedName>
    <alternativeName>
        <fullName>Cell proliferation-inducing gene 22 protein</fullName>
    </alternativeName>
</protein>
<evidence type="ECO:0000250" key="1"/>
<evidence type="ECO:0000250" key="2">
    <source>
        <dbReference type="UniProtKB" id="E9Q4S1"/>
    </source>
</evidence>
<evidence type="ECO:0000250" key="3">
    <source>
        <dbReference type="UniProtKB" id="O60658"/>
    </source>
</evidence>
<evidence type="ECO:0000250" key="4">
    <source>
        <dbReference type="UniProtKB" id="O76083"/>
    </source>
</evidence>
<evidence type="ECO:0000255" key="5">
    <source>
        <dbReference type="PROSITE-ProRule" id="PRU00140"/>
    </source>
</evidence>
<evidence type="ECO:0000255" key="6">
    <source>
        <dbReference type="PROSITE-ProRule" id="PRU01192"/>
    </source>
</evidence>
<evidence type="ECO:0000256" key="7">
    <source>
        <dbReference type="SAM" id="MobiDB-lite"/>
    </source>
</evidence>
<evidence type="ECO:0000269" key="8">
    <source>
    </source>
</evidence>
<evidence type="ECO:0000269" key="9">
    <source>
    </source>
</evidence>
<evidence type="ECO:0000269" key="10">
    <source>
    </source>
</evidence>
<evidence type="ECO:0000269" key="11">
    <source>
    </source>
</evidence>
<evidence type="ECO:0000303" key="12">
    <source>
    </source>
</evidence>
<evidence type="ECO:0000303" key="13">
    <source>
    </source>
</evidence>
<evidence type="ECO:0000303" key="14">
    <source>
    </source>
</evidence>
<evidence type="ECO:0000303" key="15">
    <source ref="3"/>
</evidence>
<evidence type="ECO:0000305" key="16"/>
<evidence type="ECO:0007744" key="17">
    <source>
    </source>
</evidence>
<evidence type="ECO:0007744" key="18">
    <source>
    </source>
</evidence>
<evidence type="ECO:0007744" key="19">
    <source>
    </source>
</evidence>
<accession>O95263</accession>
<accession>Q5J7V7</accession>
<accession>Q86XK8</accession>
<accession>Q8IUJ7</accession>
<accession>Q8IUJ8</accession>
<accession>Q8IUJ9</accession>
<accession>Q8IUK0</accession>
<accession>Q8N3T2</accession>
<comment type="function">
    <text>Hydrolyzes the second messenger cAMP, which is a key regulator of many important physiological processes. May be involved in specific signaling in the thyroid gland.</text>
</comment>
<comment type="catalytic activity">
    <reaction evidence="9">
        <text>3',5'-cyclic AMP + H2O = AMP + H(+)</text>
        <dbReference type="Rhea" id="RHEA:25277"/>
        <dbReference type="ChEBI" id="CHEBI:15377"/>
        <dbReference type="ChEBI" id="CHEBI:15378"/>
        <dbReference type="ChEBI" id="CHEBI:58165"/>
        <dbReference type="ChEBI" id="CHEBI:456215"/>
        <dbReference type="EC" id="3.1.4.53"/>
    </reaction>
</comment>
<comment type="cofactor">
    <cofactor evidence="1">
        <name>a divalent metal cation</name>
        <dbReference type="ChEBI" id="CHEBI:60240"/>
    </cofactor>
    <text evidence="1">Binds 2 divalent metal cations per subunit. Site 1 may preferentially bind zinc ions, while site 2 has a preference for magnesium and/or manganese ions.</text>
</comment>
<comment type="activity regulation">
    <text evidence="9">Inhibited by dipyridimole. Insensitive to selective PDE inhibitors including rolipram and milrinone as well as to the non-selective inhibitor, IBMX. Unaffected by cGMP.</text>
</comment>
<comment type="pathway">
    <text>Purine metabolism; 3',5'-cyclic AMP degradation; AMP from 3',5'-cyclic AMP: step 1/1.</text>
</comment>
<comment type="alternative products">
    <event type="alternative splicing"/>
    <isoform>
        <id>O95263-1</id>
        <name>1</name>
        <name>PDE8B1</name>
        <sequence type="displayed"/>
    </isoform>
    <isoform>
        <id>O95263-2</id>
        <name>2</name>
        <name>PDE8B2</name>
        <name>PDE8B3</name>
        <sequence type="described" ref="VSP_008084"/>
    </isoform>
    <isoform>
        <id>O95263-3</id>
        <name>3</name>
        <name>PDE8B3</name>
        <sequence type="described" ref="VSP_008085"/>
    </isoform>
    <isoform>
        <id>O95263-4</id>
        <name>4</name>
        <name>PDE8B4</name>
        <sequence type="described" ref="VSP_008082"/>
    </isoform>
    <isoform>
        <id>O95263-5</id>
        <name>5</name>
        <sequence type="described" ref="VSP_008081"/>
    </isoform>
    <isoform>
        <id>O95263-6</id>
        <name>6</name>
        <name>PDE8B2</name>
        <sequence type="described" ref="VSP_008083"/>
    </isoform>
</comment>
<comment type="tissue specificity">
    <text evidence="8 9">Abundantly expressed in the thyroid. Also very weakly expressed in brain, spinal cord and placenta. In the thyroid isoform 1 predominates, and isoforms 2 and 6 are also highly expressed. In the placenta isoforms 1 and 2 are expressed equally. In the brain isoform 2 predominates.</text>
</comment>
<comment type="domain">
    <text>Composed of a C-terminal catalytic domain containing two putative divalent metal sites and an N-terminal regulatory domain.</text>
</comment>
<comment type="disease" evidence="11">
    <disease id="DI-02813">
        <name>Striatal degeneration, autosomal dominant 1</name>
        <acronym>ADSD1</acronym>
        <description>A movement disorder affecting the striatal part of the basal ganglia and characterized by bradykinesia, dysarthria and muscle rigidity. These symptoms resemble idiopathic Parkinson disease, but tremor is not present.</description>
        <dbReference type="MIM" id="609161"/>
    </disease>
    <text>The disease is caused by variants affecting the gene represented in this entry.</text>
</comment>
<comment type="disease" evidence="10">
    <disease id="DI-03239">
        <name>Primary pigmented nodular adrenocortical disease 3</name>
        <acronym>PPNAD3</acronym>
        <description>A rare bilateral adrenal defect causing ACTH-independent Cushing syndrome. Macroscopic appearance of the adrenals is characteristic with small pigmented micronodules observed in the cortex. Adrenal glands show overall normal size and weight, and multiple small yellow-to-dark brown nodules surrounded by a cortex with a uniform appearance. Microscopically, there are moderate diffuse cortical hyperplasia with mostly nonpigmented nodules, multiple capsular deficits and massive circumscribed and infiltrating extra-adrenal cortical excrescences with micronodules. Clinical manifestations of Cushing syndrome include facial and truncal obesity, abdominal striae, muscular weakness, osteoporosis, arterial hypertension, diabetes.</description>
        <dbReference type="MIM" id="614190"/>
    </disease>
    <text>The disease is caused by variants affecting the gene represented in this entry.</text>
</comment>
<comment type="miscellaneous">
    <molecule>Isoform 1</molecule>
    <text>Major isoform.</text>
</comment>
<comment type="similarity">
    <text evidence="16">Belongs to the cyclic nucleotide phosphodiesterase family. PDE8 subfamily.</text>
</comment>
<organism>
    <name type="scientific">Homo sapiens</name>
    <name type="common">Human</name>
    <dbReference type="NCBI Taxonomy" id="9606"/>
    <lineage>
        <taxon>Eukaryota</taxon>
        <taxon>Metazoa</taxon>
        <taxon>Chordata</taxon>
        <taxon>Craniata</taxon>
        <taxon>Vertebrata</taxon>
        <taxon>Euteleostomi</taxon>
        <taxon>Mammalia</taxon>
        <taxon>Eutheria</taxon>
        <taxon>Euarchontoglires</taxon>
        <taxon>Primates</taxon>
        <taxon>Haplorrhini</taxon>
        <taxon>Catarrhini</taxon>
        <taxon>Hominidae</taxon>
        <taxon>Homo</taxon>
    </lineage>
</organism>
<feature type="chain" id="PRO_0000198840" description="High affinity cAMP-specific and IBMX-insensitive 3',5'-cyclic phosphodiesterase 8B">
    <location>
        <begin position="1"/>
        <end position="885"/>
    </location>
</feature>
<feature type="domain" description="PAS" evidence="5">
    <location>
        <begin position="267"/>
        <end position="338"/>
    </location>
</feature>
<feature type="domain" description="PDEase" evidence="6">
    <location>
        <begin position="539"/>
        <end position="875"/>
    </location>
</feature>
<feature type="region of interest" description="Disordered" evidence="7">
    <location>
        <begin position="18"/>
        <end position="41"/>
    </location>
</feature>
<feature type="region of interest" description="Disordered" evidence="7">
    <location>
        <begin position="72"/>
        <end position="95"/>
    </location>
</feature>
<feature type="region of interest" description="Disordered" evidence="7">
    <location>
        <begin position="393"/>
        <end position="436"/>
    </location>
</feature>
<feature type="compositionally biased region" description="Polar residues" evidence="7">
    <location>
        <begin position="23"/>
        <end position="34"/>
    </location>
</feature>
<feature type="compositionally biased region" description="Low complexity" evidence="7">
    <location>
        <begin position="75"/>
        <end position="90"/>
    </location>
</feature>
<feature type="compositionally biased region" description="Polar residues" evidence="7">
    <location>
        <begin position="422"/>
        <end position="436"/>
    </location>
</feature>
<feature type="active site" description="Proton donor" evidence="4">
    <location>
        <position position="615"/>
    </location>
</feature>
<feature type="binding site" evidence="3">
    <location>
        <position position="619"/>
    </location>
    <ligand>
        <name>a divalent metal cation</name>
        <dbReference type="ChEBI" id="CHEBI:60240"/>
        <label>1</label>
    </ligand>
</feature>
<feature type="binding site" evidence="3">
    <location>
        <position position="655"/>
    </location>
    <ligand>
        <name>a divalent metal cation</name>
        <dbReference type="ChEBI" id="CHEBI:60240"/>
        <label>1</label>
    </ligand>
</feature>
<feature type="binding site" evidence="3">
    <location>
        <position position="656"/>
    </location>
    <ligand>
        <name>a divalent metal cation</name>
        <dbReference type="ChEBI" id="CHEBI:60240"/>
        <label>1</label>
    </ligand>
</feature>
<feature type="binding site" evidence="3">
    <location>
        <position position="656"/>
    </location>
    <ligand>
        <name>a divalent metal cation</name>
        <dbReference type="ChEBI" id="CHEBI:60240"/>
        <label>2</label>
    </ligand>
</feature>
<feature type="binding site" evidence="3">
    <location>
        <position position="781"/>
    </location>
    <ligand>
        <name>a divalent metal cation</name>
        <dbReference type="ChEBI" id="CHEBI:60240"/>
        <label>1</label>
    </ligand>
</feature>
<feature type="modified residue" description="Phosphoserine" evidence="17 18 19">
    <location>
        <position position="517"/>
    </location>
</feature>
<feature type="modified residue" description="Phosphoserine" evidence="2">
    <location>
        <position position="754"/>
    </location>
</feature>
<feature type="splice variant" id="VSP_008081" description="In isoform 5." evidence="14 15">
    <location>
        <begin position="1"/>
        <end position="535"/>
    </location>
</feature>
<feature type="splice variant" id="VSP_008082" description="In isoform 4." evidence="13">
    <location>
        <begin position="114"/>
        <end position="133"/>
    </location>
</feature>
<feature type="splice variant" id="VSP_008084" description="In isoform 2." evidence="12 13">
    <location>
        <begin position="293"/>
        <end position="389"/>
    </location>
</feature>
<feature type="splice variant" id="VSP_008083" description="In isoform 6." evidence="12">
    <location>
        <begin position="293"/>
        <end position="339"/>
    </location>
</feature>
<feature type="splice variant" id="VSP_008085" description="In isoform 3." evidence="13">
    <location>
        <begin position="456"/>
        <end position="510"/>
    </location>
</feature>
<feature type="sequence variant" id="VAR_066503" description="In PPNAD3; shows significantly higher cyclic AMP levels after transfection with the mutant protein than after transfection with the wild-type, indicating an impaired ability of the mutant protein to degrade cAMP; dbSNP:rs121918360." evidence="10">
    <original>H</original>
    <variation>P</variation>
    <location>
        <position position="305"/>
    </location>
</feature>
<feature type="sequence conflict" description="In Ref. 7; CAD38584." evidence="16" ref="7">
    <original>G</original>
    <variation>R</variation>
    <location>
        <position position="147"/>
    </location>
</feature>
<reference key="1">
    <citation type="journal article" date="2002" name="Biochem. Biophys. Res. Commun.">
        <title>Genomic organization, chromosomal localization, and alternative splicing of the human phosphodiesterase 8B gene.</title>
        <authorList>
            <person name="Hayashi M."/>
            <person name="Shimada Y."/>
            <person name="Nishimura Y."/>
            <person name="Hama T."/>
            <person name="Tanaka T."/>
        </authorList>
    </citation>
    <scope>NUCLEOTIDE SEQUENCE [GENOMIC DNA / MRNA] (ISOFORMS 1; 2 AND 6)</scope>
    <scope>TISSUE SPECIFICITY</scope>
</reference>
<reference key="2">
    <citation type="journal article" date="2003" name="Cell. Signal.">
        <title>Comparison of enzymatic characterization and gene organization of cyclic nucleotide phosphodiesterase 8 family in humans.</title>
        <authorList>
            <person name="Gamanuma M."/>
            <person name="Yuasa K."/>
            <person name="Sasaki T."/>
            <person name="Sakurai N."/>
            <person name="Kotera J."/>
            <person name="Omori K."/>
        </authorList>
    </citation>
    <scope>NUCLEOTIDE SEQUENCE [MRNA] (ISOFORMS 1; 2; 3 AND 4)</scope>
    <scope>CATALYTIC ACTIVITY</scope>
    <scope>ACTIVITY REGULATION</scope>
    <scope>TISSUE SPECIFICITY</scope>
    <source>
        <tissue>Thyroid</tissue>
    </source>
</reference>
<reference key="3">
    <citation type="submission" date="2003-09" db="EMBL/GenBank/DDBJ databases">
        <title>Identification of a human proliferation-inducing gene.</title>
        <authorList>
            <person name="Kim J.W."/>
        </authorList>
    </citation>
    <scope>NUCLEOTIDE SEQUENCE [LARGE SCALE MRNA] (ISOFORM 5)</scope>
</reference>
<reference key="4">
    <citation type="submission" date="2005-07" db="EMBL/GenBank/DDBJ databases">
        <authorList>
            <person name="Mural R.J."/>
            <person name="Istrail S."/>
            <person name="Sutton G.G."/>
            <person name="Florea L."/>
            <person name="Halpern A.L."/>
            <person name="Mobarry C.M."/>
            <person name="Lippert R."/>
            <person name="Walenz B."/>
            <person name="Shatkay H."/>
            <person name="Dew I."/>
            <person name="Miller J.R."/>
            <person name="Flanigan M.J."/>
            <person name="Edwards N.J."/>
            <person name="Bolanos R."/>
            <person name="Fasulo D."/>
            <person name="Halldorsson B.V."/>
            <person name="Hannenhalli S."/>
            <person name="Turner R."/>
            <person name="Yooseph S."/>
            <person name="Lu F."/>
            <person name="Nusskern D.R."/>
            <person name="Shue B.C."/>
            <person name="Zheng X.H."/>
            <person name="Zhong F."/>
            <person name="Delcher A.L."/>
            <person name="Huson D.H."/>
            <person name="Kravitz S.A."/>
            <person name="Mouchard L."/>
            <person name="Reinert K."/>
            <person name="Remington K.A."/>
            <person name="Clark A.G."/>
            <person name="Waterman M.S."/>
            <person name="Eichler E.E."/>
            <person name="Adams M.D."/>
            <person name="Hunkapiller M.W."/>
            <person name="Myers E.W."/>
            <person name="Venter J.C."/>
        </authorList>
    </citation>
    <scope>NUCLEOTIDE SEQUENCE [LARGE SCALE GENOMIC DNA]</scope>
</reference>
<reference key="5">
    <citation type="journal article" date="2004" name="Genome Res.">
        <title>The status, quality, and expansion of the NIH full-length cDNA project: the Mammalian Gene Collection (MGC).</title>
        <authorList>
            <consortium name="The MGC Project Team"/>
        </authorList>
    </citation>
    <scope>NUCLEOTIDE SEQUENCE [LARGE SCALE MRNA] (ISOFORM 5)</scope>
    <source>
        <tissue>Testis</tissue>
    </source>
</reference>
<reference key="6">
    <citation type="journal article" date="1998" name="Biochem. Biophys. Res. Commun.">
        <title>Molecular cloning and characterization of human PDE8B, a novel thyroid-specific isozyme of 3',5'-cyclic nucleotide phosphodiesterase.</title>
        <authorList>
            <person name="Hayashi M."/>
            <person name="Matsushima K."/>
            <person name="Ohashi H."/>
            <person name="Tsunoda H."/>
            <person name="Murase S."/>
            <person name="Kawarada Y."/>
            <person name="Tanaka T."/>
        </authorList>
    </citation>
    <scope>NUCLEOTIDE SEQUENCE [MRNA] OF 227-885 (ISOFORM 1)</scope>
</reference>
<reference key="7">
    <citation type="journal article" date="2007" name="BMC Genomics">
        <title>The full-ORF clone resource of the German cDNA consortium.</title>
        <authorList>
            <person name="Bechtel S."/>
            <person name="Rosenfelder H."/>
            <person name="Duda A."/>
            <person name="Schmidt C.P."/>
            <person name="Ernst U."/>
            <person name="Wellenreuther R."/>
            <person name="Mehrle A."/>
            <person name="Schuster C."/>
            <person name="Bahr A."/>
            <person name="Bloecker H."/>
            <person name="Heubner D."/>
            <person name="Hoerlein A."/>
            <person name="Michel G."/>
            <person name="Wedler H."/>
            <person name="Koehrer K."/>
            <person name="Ottenwaelder B."/>
            <person name="Poustka A."/>
            <person name="Wiemann S."/>
            <person name="Schupp I."/>
        </authorList>
    </citation>
    <scope>NUCLEOTIDE SEQUENCE [LARGE SCALE MRNA] OF 43-885 (ISOFORM 1)</scope>
    <source>
        <tissue>Amygdala</tissue>
    </source>
</reference>
<reference key="8">
    <citation type="journal article" date="2008" name="Proc. Natl. Acad. Sci. U.S.A.">
        <title>A quantitative atlas of mitotic phosphorylation.</title>
        <authorList>
            <person name="Dephoure N."/>
            <person name="Zhou C."/>
            <person name="Villen J."/>
            <person name="Beausoleil S.A."/>
            <person name="Bakalarski C.E."/>
            <person name="Elledge S.J."/>
            <person name="Gygi S.P."/>
        </authorList>
    </citation>
    <scope>PHOSPHORYLATION [LARGE SCALE ANALYSIS] AT SER-517</scope>
    <scope>IDENTIFICATION BY MASS SPECTROMETRY [LARGE SCALE ANALYSIS]</scope>
    <source>
        <tissue>Cervix carcinoma</tissue>
    </source>
</reference>
<reference key="9">
    <citation type="journal article" date="2010" name="Am. J. Hum. Genet.">
        <title>Autosomal-dominant striatal degeneration is caused by a mutation in the phosphodiesterase 8B gene.</title>
        <authorList>
            <person name="Appenzeller S."/>
            <person name="Schirmacher A."/>
            <person name="Halfter H."/>
            <person name="Baumer S."/>
            <person name="Pendziwiat M."/>
            <person name="Timmerman V."/>
            <person name="De Jonghe P."/>
            <person name="Fekete K."/>
            <person name="Stogbauer F."/>
            <person name="Ludemann P."/>
            <person name="Hund M."/>
            <person name="Quabius E.S."/>
            <person name="Ringelstein E.B."/>
            <person name="Kuhlenbaumer G."/>
        </authorList>
    </citation>
    <scope>INVOLVEMENT IN ADSD1</scope>
</reference>
<reference key="10">
    <citation type="journal article" date="2010" name="Sci. Signal.">
        <title>Quantitative phosphoproteomics reveals widespread full phosphorylation site occupancy during mitosis.</title>
        <authorList>
            <person name="Olsen J.V."/>
            <person name="Vermeulen M."/>
            <person name="Santamaria A."/>
            <person name="Kumar C."/>
            <person name="Miller M.L."/>
            <person name="Jensen L.J."/>
            <person name="Gnad F."/>
            <person name="Cox J."/>
            <person name="Jensen T.S."/>
            <person name="Nigg E.A."/>
            <person name="Brunak S."/>
            <person name="Mann M."/>
        </authorList>
    </citation>
    <scope>PHOSPHORYLATION [LARGE SCALE ANALYSIS] AT SER-517</scope>
    <scope>IDENTIFICATION BY MASS SPECTROMETRY [LARGE SCALE ANALYSIS]</scope>
    <source>
        <tissue>Cervix carcinoma</tissue>
    </source>
</reference>
<reference key="11">
    <citation type="journal article" date="2013" name="J. Proteome Res.">
        <title>Toward a comprehensive characterization of a human cancer cell phosphoproteome.</title>
        <authorList>
            <person name="Zhou H."/>
            <person name="Di Palma S."/>
            <person name="Preisinger C."/>
            <person name="Peng M."/>
            <person name="Polat A.N."/>
            <person name="Heck A.J."/>
            <person name="Mohammed S."/>
        </authorList>
    </citation>
    <scope>PHOSPHORYLATION [LARGE SCALE ANALYSIS] AT SER-517</scope>
    <scope>IDENTIFICATION BY MASS SPECTROMETRY [LARGE SCALE ANALYSIS]</scope>
    <source>
        <tissue>Cervix carcinoma</tissue>
    </source>
</reference>
<reference key="12">
    <citation type="journal article" date="2008" name="Eur. J. Hum. Genet.">
        <title>A cAMP-specific phosphodiesterase (PDE8B) that is mutated in adrenal hyperplasia is expressed widely in human and mouse tissues: a novel PDE8B isoform in human adrenal cortex.</title>
        <authorList>
            <person name="Horvath A."/>
            <person name="Giatzakis C."/>
            <person name="Tsang K."/>
            <person name="Greene E."/>
            <person name="Osorio P."/>
            <person name="Boikos S."/>
            <person name="Libe R."/>
            <person name="Patronas Y."/>
            <person name="Robinson-White A."/>
            <person name="Remmers E."/>
            <person name="Bertherat J."/>
            <person name="Nesterova M."/>
            <person name="Stratakis C.A."/>
        </authorList>
    </citation>
    <scope>VARIANT PPNAD3 PRO-305</scope>
    <scope>CHARACTERIZATION OF VARIANT PPNAD3 PRO-305</scope>
</reference>
<keyword id="KW-0025">Alternative splicing</keyword>
<keyword id="KW-0114">cAMP</keyword>
<keyword id="KW-1062">Cushing syndrome</keyword>
<keyword id="KW-0225">Disease variant</keyword>
<keyword id="KW-0378">Hydrolase</keyword>
<keyword id="KW-0479">Metal-binding</keyword>
<keyword id="KW-0597">Phosphoprotein</keyword>
<keyword id="KW-1267">Proteomics identification</keyword>
<keyword id="KW-1185">Reference proteome</keyword>